<organism>
    <name type="scientific">African swine fever virus (isolate Pig/Kenya/KEN-50/1950)</name>
    <name type="common">ASFV</name>
    <dbReference type="NCBI Taxonomy" id="561445"/>
    <lineage>
        <taxon>Viruses</taxon>
        <taxon>Varidnaviria</taxon>
        <taxon>Bamfordvirae</taxon>
        <taxon>Nucleocytoviricota</taxon>
        <taxon>Pokkesviricetes</taxon>
        <taxon>Asfuvirales</taxon>
        <taxon>Asfarviridae</taxon>
        <taxon>Asfivirus</taxon>
        <taxon>African swine fever virus</taxon>
    </lineage>
</organism>
<accession>P0C9C2</accession>
<comment type="function">
    <text evidence="3">Type II topoisomerase. Processively relaxes supercoiled DNA. Displays DNA-supercoiling activity only when associated with the viral histone-like protein.</text>
</comment>
<comment type="catalytic activity">
    <reaction evidence="4">
        <text>ATP-dependent breakage, passage and rejoining of double-stranded DNA.</text>
        <dbReference type="EC" id="5.6.2.2"/>
    </reaction>
</comment>
<comment type="cofactor">
    <cofactor evidence="2">
        <name>Mg(2+)</name>
        <dbReference type="ChEBI" id="CHEBI:18420"/>
    </cofactor>
    <cofactor evidence="2">
        <name>Mn(2+)</name>
        <dbReference type="ChEBI" id="CHEBI:29035"/>
    </cofactor>
    <cofactor evidence="2">
        <name>Ca(2+)</name>
        <dbReference type="ChEBI" id="CHEBI:29108"/>
    </cofactor>
    <text evidence="2">Binds two Mg(2+) per subunit. The magnesium ions form salt bridges with both the protein and the DNA. Can also accept other divalent metal cations, such as Mn(2+) or Ca(2+).</text>
</comment>
<comment type="subcellular location">
    <subcellularLocation>
        <location evidence="3">Host cytoplasm</location>
    </subcellularLocation>
    <text evidence="3">Localizes throughout the cytoplasmic viral factories at 16 hpi.</text>
</comment>
<comment type="induction">
    <text evidence="5">Expressed in the early phase of the viral replicative cycle.</text>
</comment>
<comment type="similarity">
    <text evidence="5">Belongs to the type II topoisomerase family.</text>
</comment>
<organismHost>
    <name type="scientific">Ornithodoros</name>
    <name type="common">relapsing fever ticks</name>
    <dbReference type="NCBI Taxonomy" id="6937"/>
</organismHost>
<organismHost>
    <name type="scientific">Phacochoerus aethiopicus</name>
    <name type="common">Warthog</name>
    <dbReference type="NCBI Taxonomy" id="85517"/>
</organismHost>
<organismHost>
    <name type="scientific">Phacochoerus africanus</name>
    <name type="common">Warthog</name>
    <dbReference type="NCBI Taxonomy" id="41426"/>
</organismHost>
<organismHost>
    <name type="scientific">Potamochoerus larvatus</name>
    <name type="common">Bushpig</name>
    <dbReference type="NCBI Taxonomy" id="273792"/>
</organismHost>
<organismHost>
    <name type="scientific">Sus scrofa</name>
    <name type="common">Pig</name>
    <dbReference type="NCBI Taxonomy" id="9823"/>
</organismHost>
<gene>
    <name type="ordered locus">Ken-124</name>
</gene>
<protein>
    <recommendedName>
        <fullName evidence="3">DNA topoisomerase 2</fullName>
        <ecNumber evidence="4">5.6.2.2</ecNumber>
    </recommendedName>
    <alternativeName>
        <fullName>DNA topoisomerase II</fullName>
    </alternativeName>
</protein>
<sequence length="1192" mass="135365">METFEISDFKEHAKKKSMWAGALNKVTISGLMGVFTEDEDLMALPIHRDHCPALLKIFDELIVNATDHERACHNKTKKVTYIKISFDKGVFSCENDGPGIPIVKHEQASLIAKRDVYVPEVASCYFLAGTNINKAKDCIKGGTNGVGLKLAMVHSQWAILTTADGAQKYVQHINQRLDNIEPPTITPSREMFTRIELMPVYQELGYAQPLSETEQADLSAWIYLRACQCAAYVGKGTTIYYNDKPCSTSSVMALAKMYTLVTAPNSTIYTTTIKADAKPYSLHPLQVAAVVSPKFKKFEHVSIINGVNCVKGEHVTFLKKAINEMVVKKFQQTVKDKNRKTTLRDSCSNIFVVIVGSIPGIEWTGQRKDELSIAENVFKTHYSIPSSFLTSMTRSIVDILLQSISKKDNHKQIDVDKYTRARNAGGKKAQDCMLLAAEGDSALSLLRAGLTLGKSNPSGPSFDFCGMISLGGVIMNACKKVTNITTDSGETIMVRNEQLTNNKVLQGIVQVLGLDFNCHYKTQEERAKLRYGCIVACVDQDLDGCGKILGLLLAYFHLFWPQLIVHGFVKRLLTPLIRVYEKGNTVPVEFYYEQEFDAWAKKQTSLANHTVKYYKGLAAHDTHEVKSMFKHFDKMVYTFTLDDSAKELFHIYFGGESELRKRELCTGVVPLTETQTQSIHSVRRIPCSLHLQVDTKAYKLDAIERQIPNFLDGMTRARRKILAGGLKCFASNNRERKVFQFGGYVADHMFYHHGDMSLNTSIIKAAQYYPGSSHLYPVFIGIGSFGSRHLGGKDAGSPRYISVQLASEFIKTMFPAEDSWLLPYVFEDGQRAEPEYYVPVLPLAIMEYGANPSEGWKYTTWARQLEDILALVRAYIDKNNPKHELLHYAIDHKITVLPLRPSNYNFKGHLKRFGQYYYSYGTYVVSEQRNMITITELPLRVPTVAYIESIKKSSNRMAFIEEIVDYSSSETIEILVKLKPNSLSRIIEEFKETEEQNSIENFLRLRNCLHSHLNFVKPKGGIIEFNSYYEILYAWLPYRRDLYQKRLMRERAVLKLRIIMETAIVRYINESADLNLSHYEDEKEAGRILSEHGFPPLNQSLITSPEFATIEELNQKALQGCYTYILSLQARELLIAAKTRRVEKIKKMQARLDKVEQLLQESPFPGASVWLEEIDAVEKAIIKGRNTQWKFH</sequence>
<dbReference type="EC" id="5.6.2.2" evidence="4"/>
<dbReference type="EMBL" id="AY261360">
    <property type="status" value="NOT_ANNOTATED_CDS"/>
    <property type="molecule type" value="Genomic_DNA"/>
</dbReference>
<dbReference type="PDB" id="8YGE">
    <property type="method" value="EM"/>
    <property type="resolution" value="2.76 A"/>
    <property type="chains" value="A/B=1-1192"/>
</dbReference>
<dbReference type="PDB" id="8YGG">
    <property type="method" value="EM"/>
    <property type="resolution" value="2.98 A"/>
    <property type="chains" value="A/B=1-1192"/>
</dbReference>
<dbReference type="PDB" id="8YGH">
    <property type="method" value="EM"/>
    <property type="resolution" value="2.77 A"/>
    <property type="chains" value="A/B=1-1192"/>
</dbReference>
<dbReference type="PDB" id="8YIK">
    <property type="method" value="X-ray"/>
    <property type="resolution" value="1.30 A"/>
    <property type="chains" value="A=1-403"/>
</dbReference>
<dbReference type="PDBsum" id="8YGE"/>
<dbReference type="PDBsum" id="8YGG"/>
<dbReference type="PDBsum" id="8YGH"/>
<dbReference type="PDBsum" id="8YIK"/>
<dbReference type="SMR" id="P0C9C2"/>
<dbReference type="Proteomes" id="UP000000861">
    <property type="component" value="Segment"/>
</dbReference>
<dbReference type="GO" id="GO:0030430">
    <property type="term" value="C:host cell cytoplasm"/>
    <property type="evidence" value="ECO:0007669"/>
    <property type="project" value="UniProtKB-SubCell"/>
</dbReference>
<dbReference type="GO" id="GO:0005524">
    <property type="term" value="F:ATP binding"/>
    <property type="evidence" value="ECO:0007669"/>
    <property type="project" value="UniProtKB-KW"/>
</dbReference>
<dbReference type="GO" id="GO:0003677">
    <property type="term" value="F:DNA binding"/>
    <property type="evidence" value="ECO:0007669"/>
    <property type="project" value="UniProtKB-KW"/>
</dbReference>
<dbReference type="GO" id="GO:0003918">
    <property type="term" value="F:DNA topoisomerase type II (double strand cut, ATP-hydrolyzing) activity"/>
    <property type="evidence" value="ECO:0007669"/>
    <property type="project" value="UniProtKB-EC"/>
</dbReference>
<dbReference type="GO" id="GO:0046872">
    <property type="term" value="F:metal ion binding"/>
    <property type="evidence" value="ECO:0007669"/>
    <property type="project" value="UniProtKB-KW"/>
</dbReference>
<dbReference type="GO" id="GO:0006265">
    <property type="term" value="P:DNA topological change"/>
    <property type="evidence" value="ECO:0007669"/>
    <property type="project" value="InterPro"/>
</dbReference>
<dbReference type="GO" id="GO:0000819">
    <property type="term" value="P:sister chromatid segregation"/>
    <property type="evidence" value="ECO:0007669"/>
    <property type="project" value="TreeGrafter"/>
</dbReference>
<dbReference type="FunFam" id="3.40.50.670:FF:000001">
    <property type="entry name" value="DNA topoisomerase 2"/>
    <property type="match status" value="1"/>
</dbReference>
<dbReference type="Gene3D" id="3.30.1360.40">
    <property type="match status" value="1"/>
</dbReference>
<dbReference type="Gene3D" id="3.30.1490.30">
    <property type="match status" value="1"/>
</dbReference>
<dbReference type="Gene3D" id="3.30.230.10">
    <property type="match status" value="1"/>
</dbReference>
<dbReference type="Gene3D" id="3.40.50.670">
    <property type="match status" value="1"/>
</dbReference>
<dbReference type="Gene3D" id="3.30.565.10">
    <property type="entry name" value="Histidine kinase-like ATPase, C-terminal domain"/>
    <property type="match status" value="1"/>
</dbReference>
<dbReference type="Gene3D" id="3.90.199.10">
    <property type="entry name" value="Topoisomerase II, domain 5"/>
    <property type="match status" value="1"/>
</dbReference>
<dbReference type="Gene3D" id="1.10.268.10">
    <property type="entry name" value="Topoisomerase, domain 3"/>
    <property type="match status" value="1"/>
</dbReference>
<dbReference type="InterPro" id="IPR050634">
    <property type="entry name" value="DNA_Topoisomerase_II"/>
</dbReference>
<dbReference type="InterPro" id="IPR036890">
    <property type="entry name" value="HATPase_C_sf"/>
</dbReference>
<dbReference type="InterPro" id="IPR020568">
    <property type="entry name" value="Ribosomal_Su5_D2-typ_SF"/>
</dbReference>
<dbReference type="InterPro" id="IPR014721">
    <property type="entry name" value="Ribsml_uS5_D2-typ_fold_subgr"/>
</dbReference>
<dbReference type="InterPro" id="IPR001241">
    <property type="entry name" value="Topo_IIA"/>
</dbReference>
<dbReference type="InterPro" id="IPR013760">
    <property type="entry name" value="Topo_IIA-like_dom_sf"/>
</dbReference>
<dbReference type="InterPro" id="IPR013758">
    <property type="entry name" value="Topo_IIA_A/C_ab"/>
</dbReference>
<dbReference type="InterPro" id="IPR013757">
    <property type="entry name" value="Topo_IIA_A_a_sf"/>
</dbReference>
<dbReference type="InterPro" id="IPR013759">
    <property type="entry name" value="Topo_IIA_B_C"/>
</dbReference>
<dbReference type="InterPro" id="IPR002205">
    <property type="entry name" value="Topo_IIA_dom_A"/>
</dbReference>
<dbReference type="InterPro" id="IPR001154">
    <property type="entry name" value="TopoII_euk"/>
</dbReference>
<dbReference type="InterPro" id="IPR018522">
    <property type="entry name" value="TopoIIA_CS"/>
</dbReference>
<dbReference type="InterPro" id="IPR031660">
    <property type="entry name" value="TOPRIM_C"/>
</dbReference>
<dbReference type="PANTHER" id="PTHR10169:SF38">
    <property type="entry name" value="DNA TOPOISOMERASE 2"/>
    <property type="match status" value="1"/>
</dbReference>
<dbReference type="PANTHER" id="PTHR10169">
    <property type="entry name" value="DNA TOPOISOMERASE/GYRASE"/>
    <property type="match status" value="1"/>
</dbReference>
<dbReference type="Pfam" id="PF00521">
    <property type="entry name" value="DNA_topoisoIV"/>
    <property type="match status" value="1"/>
</dbReference>
<dbReference type="Pfam" id="PF16898">
    <property type="entry name" value="TOPRIM_C"/>
    <property type="match status" value="1"/>
</dbReference>
<dbReference type="PRINTS" id="PR01158">
    <property type="entry name" value="TOPISMRASEII"/>
</dbReference>
<dbReference type="PRINTS" id="PR00418">
    <property type="entry name" value="TPI2FAMILY"/>
</dbReference>
<dbReference type="SMART" id="SM00433">
    <property type="entry name" value="TOP2c"/>
    <property type="match status" value="1"/>
</dbReference>
<dbReference type="SMART" id="SM00434">
    <property type="entry name" value="TOP4c"/>
    <property type="match status" value="1"/>
</dbReference>
<dbReference type="SUPFAM" id="SSF55874">
    <property type="entry name" value="ATPase domain of HSP90 chaperone/DNA topoisomerase II/histidine kinase"/>
    <property type="match status" value="1"/>
</dbReference>
<dbReference type="SUPFAM" id="SSF54211">
    <property type="entry name" value="Ribosomal protein S5 domain 2-like"/>
    <property type="match status" value="1"/>
</dbReference>
<dbReference type="SUPFAM" id="SSF56719">
    <property type="entry name" value="Type II DNA topoisomerase"/>
    <property type="match status" value="1"/>
</dbReference>
<dbReference type="PROSITE" id="PS52040">
    <property type="entry name" value="TOPO_IIA"/>
    <property type="match status" value="1"/>
</dbReference>
<dbReference type="PROSITE" id="PS00177">
    <property type="entry name" value="TOPOISOMERASE_II"/>
    <property type="match status" value="1"/>
</dbReference>
<feature type="chain" id="PRO_0000373132" description="DNA topoisomerase 2">
    <location>
        <begin position="1"/>
        <end position="1192"/>
    </location>
</feature>
<feature type="domain" description="Topo IIA-type catalytic" evidence="4">
    <location>
        <begin position="707"/>
        <end position="1174"/>
    </location>
</feature>
<feature type="active site" description="O-(5'-phospho-DNA)-tyrosine intermediate" evidence="4">
    <location>
        <position position="800"/>
    </location>
</feature>
<feature type="binding site" evidence="1">
    <location>
        <position position="64"/>
    </location>
    <ligand>
        <name>ATP</name>
        <dbReference type="ChEBI" id="CHEBI:30616"/>
    </ligand>
</feature>
<feature type="binding site" evidence="1">
    <location>
        <position position="95"/>
    </location>
    <ligand>
        <name>ATP</name>
        <dbReference type="ChEBI" id="CHEBI:30616"/>
    </ligand>
</feature>
<feature type="binding site" evidence="3">
    <location>
        <begin position="142"/>
        <end position="149"/>
    </location>
    <ligand>
        <name>ATP</name>
        <dbReference type="ChEBI" id="CHEBI:30616"/>
    </ligand>
</feature>
<feature type="binding site" evidence="2">
    <location>
        <position position="438"/>
    </location>
    <ligand>
        <name>Mg(2+)</name>
        <dbReference type="ChEBI" id="CHEBI:18420"/>
        <label>1</label>
        <note>catalytic</note>
    </ligand>
</feature>
<feature type="binding site" evidence="2">
    <location>
        <position position="539"/>
    </location>
    <ligand>
        <name>Mg(2+)</name>
        <dbReference type="ChEBI" id="CHEBI:18420"/>
        <label>1</label>
        <note>catalytic</note>
    </ligand>
</feature>
<feature type="binding site" evidence="2">
    <location>
        <position position="539"/>
    </location>
    <ligand>
        <name>Mg(2+)</name>
        <dbReference type="ChEBI" id="CHEBI:18420"/>
        <label>2</label>
    </ligand>
</feature>
<feature type="binding site" evidence="2">
    <location>
        <position position="541"/>
    </location>
    <ligand>
        <name>Mg(2+)</name>
        <dbReference type="ChEBI" id="CHEBI:18420"/>
        <label>2</label>
    </ligand>
</feature>
<feature type="site" description="Transition state stabilizer" evidence="1">
    <location>
        <position position="799"/>
    </location>
</feature>
<name>TOP2_ASFK5</name>
<reference key="1">
    <citation type="submission" date="2003-03" db="EMBL/GenBank/DDBJ databases">
        <title>African swine fever virus genomes.</title>
        <authorList>
            <person name="Kutish G.F."/>
            <person name="Rock D.L."/>
        </authorList>
    </citation>
    <scope>NUCLEOTIDE SEQUENCE [LARGE SCALE GENOMIC DNA]</scope>
</reference>
<evidence type="ECO:0000250" key="1"/>
<evidence type="ECO:0000250" key="2">
    <source>
        <dbReference type="UniProtKB" id="P11388"/>
    </source>
</evidence>
<evidence type="ECO:0000250" key="3">
    <source>
        <dbReference type="UniProtKB" id="Q00942"/>
    </source>
</evidence>
<evidence type="ECO:0000255" key="4">
    <source>
        <dbReference type="PROSITE-ProRule" id="PRU01384"/>
    </source>
</evidence>
<evidence type="ECO:0000305" key="5"/>
<keyword id="KW-0002">3D-structure</keyword>
<keyword id="KW-0067">ATP-binding</keyword>
<keyword id="KW-0238">DNA-binding</keyword>
<keyword id="KW-1035">Host cytoplasm</keyword>
<keyword id="KW-0413">Isomerase</keyword>
<keyword id="KW-0426">Late protein</keyword>
<keyword id="KW-0460">Magnesium</keyword>
<keyword id="KW-0479">Metal-binding</keyword>
<keyword id="KW-0547">Nucleotide-binding</keyword>
<keyword id="KW-0799">Topoisomerase</keyword>
<proteinExistence type="evidence at protein level"/>